<feature type="chain" id="PRO_1000135286" description="ATP phosphoribosyltransferase">
    <location>
        <begin position="1"/>
        <end position="214"/>
    </location>
</feature>
<name>HIS1_NOSP7</name>
<proteinExistence type="inferred from homology"/>
<organism>
    <name type="scientific">Nostoc punctiforme (strain ATCC 29133 / PCC 73102)</name>
    <dbReference type="NCBI Taxonomy" id="63737"/>
    <lineage>
        <taxon>Bacteria</taxon>
        <taxon>Bacillati</taxon>
        <taxon>Cyanobacteriota</taxon>
        <taxon>Cyanophyceae</taxon>
        <taxon>Nostocales</taxon>
        <taxon>Nostocaceae</taxon>
        <taxon>Nostoc</taxon>
    </lineage>
</organism>
<reference key="1">
    <citation type="journal article" date="2013" name="Plant Physiol.">
        <title>A Nostoc punctiforme Sugar Transporter Necessary to Establish a Cyanobacterium-Plant Symbiosis.</title>
        <authorList>
            <person name="Ekman M."/>
            <person name="Picossi S."/>
            <person name="Campbell E.L."/>
            <person name="Meeks J.C."/>
            <person name="Flores E."/>
        </authorList>
    </citation>
    <scope>NUCLEOTIDE SEQUENCE [LARGE SCALE GENOMIC DNA]</scope>
    <source>
        <strain>ATCC 29133 / PCC 73102</strain>
    </source>
</reference>
<evidence type="ECO:0000255" key="1">
    <source>
        <dbReference type="HAMAP-Rule" id="MF_01018"/>
    </source>
</evidence>
<protein>
    <recommendedName>
        <fullName evidence="1">ATP phosphoribosyltransferase</fullName>
        <shortName evidence="1">ATP-PRT</shortName>
        <shortName evidence="1">ATP-PRTase</shortName>
        <ecNumber evidence="1">2.4.2.17</ecNumber>
    </recommendedName>
</protein>
<comment type="function">
    <text evidence="1">Catalyzes the condensation of ATP and 5-phosphoribose 1-diphosphate to form N'-(5'-phosphoribosyl)-ATP (PR-ATP). Has a crucial role in the pathway because the rate of histidine biosynthesis seems to be controlled primarily by regulation of HisG enzymatic activity.</text>
</comment>
<comment type="catalytic activity">
    <reaction evidence="1">
        <text>1-(5-phospho-beta-D-ribosyl)-ATP + diphosphate = 5-phospho-alpha-D-ribose 1-diphosphate + ATP</text>
        <dbReference type="Rhea" id="RHEA:18473"/>
        <dbReference type="ChEBI" id="CHEBI:30616"/>
        <dbReference type="ChEBI" id="CHEBI:33019"/>
        <dbReference type="ChEBI" id="CHEBI:58017"/>
        <dbReference type="ChEBI" id="CHEBI:73183"/>
        <dbReference type="EC" id="2.4.2.17"/>
    </reaction>
</comment>
<comment type="pathway">
    <text evidence="1">Amino-acid biosynthesis; L-histidine biosynthesis; L-histidine from 5-phospho-alpha-D-ribose 1-diphosphate: step 1/9.</text>
</comment>
<comment type="subunit">
    <text evidence="1">Heteromultimer composed of HisG and HisZ subunits.</text>
</comment>
<comment type="subcellular location">
    <subcellularLocation>
        <location evidence="1">Cytoplasm</location>
    </subcellularLocation>
</comment>
<comment type="domain">
    <text>Lacks the C-terminal regulatory region which is replaced by HisZ.</text>
</comment>
<comment type="similarity">
    <text evidence="1">Belongs to the ATP phosphoribosyltransferase family. Short subfamily.</text>
</comment>
<accession>B2IY34</accession>
<dbReference type="EC" id="2.4.2.17" evidence="1"/>
<dbReference type="EMBL" id="CP001037">
    <property type="protein sequence ID" value="ACC84633.1"/>
    <property type="molecule type" value="Genomic_DNA"/>
</dbReference>
<dbReference type="RefSeq" id="WP_012412572.1">
    <property type="nucleotide sequence ID" value="NC_010628.1"/>
</dbReference>
<dbReference type="SMR" id="B2IY34"/>
<dbReference type="STRING" id="63737.Npun_F6361"/>
<dbReference type="EnsemblBacteria" id="ACC84633">
    <property type="protein sequence ID" value="ACC84633"/>
    <property type="gene ID" value="Npun_F6361"/>
</dbReference>
<dbReference type="KEGG" id="npu:Npun_F6361"/>
<dbReference type="eggNOG" id="COG0040">
    <property type="taxonomic scope" value="Bacteria"/>
</dbReference>
<dbReference type="HOGENOM" id="CLU_038115_2_0_3"/>
<dbReference type="OrthoDB" id="9801867at2"/>
<dbReference type="PhylomeDB" id="B2IY34"/>
<dbReference type="UniPathway" id="UPA00031">
    <property type="reaction ID" value="UER00006"/>
</dbReference>
<dbReference type="Proteomes" id="UP000001191">
    <property type="component" value="Chromosome"/>
</dbReference>
<dbReference type="GO" id="GO:0005737">
    <property type="term" value="C:cytoplasm"/>
    <property type="evidence" value="ECO:0007669"/>
    <property type="project" value="UniProtKB-SubCell"/>
</dbReference>
<dbReference type="GO" id="GO:0005524">
    <property type="term" value="F:ATP binding"/>
    <property type="evidence" value="ECO:0007669"/>
    <property type="project" value="UniProtKB-KW"/>
</dbReference>
<dbReference type="GO" id="GO:0003879">
    <property type="term" value="F:ATP phosphoribosyltransferase activity"/>
    <property type="evidence" value="ECO:0007669"/>
    <property type="project" value="UniProtKB-UniRule"/>
</dbReference>
<dbReference type="GO" id="GO:0000105">
    <property type="term" value="P:L-histidine biosynthetic process"/>
    <property type="evidence" value="ECO:0007669"/>
    <property type="project" value="UniProtKB-UniRule"/>
</dbReference>
<dbReference type="CDD" id="cd13595">
    <property type="entry name" value="PBP2_HisGs"/>
    <property type="match status" value="1"/>
</dbReference>
<dbReference type="FunFam" id="3.40.190.10:FF:000008">
    <property type="entry name" value="ATP phosphoribosyltransferase"/>
    <property type="match status" value="1"/>
</dbReference>
<dbReference type="Gene3D" id="3.40.190.10">
    <property type="entry name" value="Periplasmic binding protein-like II"/>
    <property type="match status" value="2"/>
</dbReference>
<dbReference type="HAMAP" id="MF_01018">
    <property type="entry name" value="HisG_Short"/>
    <property type="match status" value="1"/>
</dbReference>
<dbReference type="InterPro" id="IPR013820">
    <property type="entry name" value="ATP_PRibTrfase_cat"/>
</dbReference>
<dbReference type="InterPro" id="IPR018198">
    <property type="entry name" value="ATP_PRibTrfase_CS"/>
</dbReference>
<dbReference type="InterPro" id="IPR001348">
    <property type="entry name" value="ATP_PRibTrfase_HisG"/>
</dbReference>
<dbReference type="InterPro" id="IPR024893">
    <property type="entry name" value="ATP_PRibTrfase_HisG_short"/>
</dbReference>
<dbReference type="NCBIfam" id="TIGR00070">
    <property type="entry name" value="hisG"/>
    <property type="match status" value="1"/>
</dbReference>
<dbReference type="PANTHER" id="PTHR21403:SF8">
    <property type="entry name" value="ATP PHOSPHORIBOSYLTRANSFERASE"/>
    <property type="match status" value="1"/>
</dbReference>
<dbReference type="PANTHER" id="PTHR21403">
    <property type="entry name" value="ATP PHOSPHORIBOSYLTRANSFERASE ATP-PRTASE"/>
    <property type="match status" value="1"/>
</dbReference>
<dbReference type="Pfam" id="PF01634">
    <property type="entry name" value="HisG"/>
    <property type="match status" value="1"/>
</dbReference>
<dbReference type="SUPFAM" id="SSF53850">
    <property type="entry name" value="Periplasmic binding protein-like II"/>
    <property type="match status" value="1"/>
</dbReference>
<dbReference type="PROSITE" id="PS01316">
    <property type="entry name" value="ATP_P_PHORIBOSYLTR"/>
    <property type="match status" value="1"/>
</dbReference>
<sequence>MLTVALPKGELLKNSIRLLQSVGLDFSAFLDSGTRQLQIPDTKGLAKALLVRAQDVPVYVEYGQAQLGVVGYDVLREKQPQVAHLVDLQFGYCRMSVAVKASSSYRSPLDLPPHGRVASKYVNCAREYFHSLDLPVEIVPLYGSVELGPITGMSEAIVDLVSTGRTMRENGLIEIATLYESTARLIAHPLSYRMNTGNLSDVIAKLREAVLVEV</sequence>
<gene>
    <name evidence="1" type="primary">hisG</name>
    <name type="ordered locus">Npun_F6361</name>
</gene>
<keyword id="KW-0028">Amino-acid biosynthesis</keyword>
<keyword id="KW-0067">ATP-binding</keyword>
<keyword id="KW-0963">Cytoplasm</keyword>
<keyword id="KW-0328">Glycosyltransferase</keyword>
<keyword id="KW-0368">Histidine biosynthesis</keyword>
<keyword id="KW-0547">Nucleotide-binding</keyword>
<keyword id="KW-1185">Reference proteome</keyword>
<keyword id="KW-0808">Transferase</keyword>